<comment type="function">
    <text evidence="1">Catalyzes the interconversion between ADP-D-glycero-beta-D-manno-heptose and ADP-L-glycero-beta-D-manno-heptose via an epimerization at carbon 6 of the heptose.</text>
</comment>
<comment type="catalytic activity">
    <reaction evidence="1">
        <text>ADP-D-glycero-beta-D-manno-heptose = ADP-L-glycero-beta-D-manno-heptose</text>
        <dbReference type="Rhea" id="RHEA:17577"/>
        <dbReference type="ChEBI" id="CHEBI:59967"/>
        <dbReference type="ChEBI" id="CHEBI:61506"/>
        <dbReference type="EC" id="5.1.3.20"/>
    </reaction>
</comment>
<comment type="cofactor">
    <cofactor evidence="1">
        <name>NADP(+)</name>
        <dbReference type="ChEBI" id="CHEBI:58349"/>
    </cofactor>
    <text evidence="1">Binds 1 NADP(+) per subunit.</text>
</comment>
<comment type="pathway">
    <text evidence="1">Nucleotide-sugar biosynthesis; ADP-L-glycero-beta-D-manno-heptose biosynthesis; ADP-L-glycero-beta-D-manno-heptose from D-glycero-beta-D-manno-heptose 7-phosphate: step 4/4.</text>
</comment>
<comment type="subunit">
    <text evidence="1">Homopentamer.</text>
</comment>
<comment type="domain">
    <text evidence="1">Contains a large N-terminal NADP-binding domain, and a smaller C-terminal substrate-binding domain.</text>
</comment>
<comment type="similarity">
    <text evidence="1">Belongs to the NAD(P)-dependent epimerase/dehydratase family. HldD subfamily.</text>
</comment>
<protein>
    <recommendedName>
        <fullName evidence="1">ADP-L-glycero-D-manno-heptose-6-epimerase</fullName>
        <ecNumber evidence="1">5.1.3.20</ecNumber>
    </recommendedName>
    <alternativeName>
        <fullName evidence="1">ADP-L-glycero-beta-D-manno-heptose-6-epimerase</fullName>
        <shortName evidence="1">ADP-glyceromanno-heptose 6-epimerase</shortName>
        <shortName evidence="1">ADP-hep 6-epimerase</shortName>
        <shortName evidence="1">AGME</shortName>
    </alternativeName>
</protein>
<feature type="chain" id="PRO_0000255718" description="ADP-L-glycero-D-manno-heptose-6-epimerase">
    <location>
        <begin position="1"/>
        <end position="319"/>
    </location>
</feature>
<feature type="active site" description="Proton acceptor" evidence="1">
    <location>
        <position position="139"/>
    </location>
</feature>
<feature type="active site" description="Proton acceptor" evidence="1">
    <location>
        <position position="177"/>
    </location>
</feature>
<feature type="binding site" evidence="1">
    <location>
        <begin position="10"/>
        <end position="11"/>
    </location>
    <ligand>
        <name>NADP(+)</name>
        <dbReference type="ChEBI" id="CHEBI:58349"/>
    </ligand>
</feature>
<feature type="binding site" evidence="1">
    <location>
        <begin position="31"/>
        <end position="32"/>
    </location>
    <ligand>
        <name>NADP(+)</name>
        <dbReference type="ChEBI" id="CHEBI:58349"/>
    </ligand>
</feature>
<feature type="binding site" evidence="1">
    <location>
        <position position="38"/>
    </location>
    <ligand>
        <name>NADP(+)</name>
        <dbReference type="ChEBI" id="CHEBI:58349"/>
    </ligand>
</feature>
<feature type="binding site" evidence="1">
    <location>
        <position position="53"/>
    </location>
    <ligand>
        <name>NADP(+)</name>
        <dbReference type="ChEBI" id="CHEBI:58349"/>
    </ligand>
</feature>
<feature type="binding site" evidence="1">
    <location>
        <begin position="75"/>
        <end position="79"/>
    </location>
    <ligand>
        <name>NADP(+)</name>
        <dbReference type="ChEBI" id="CHEBI:58349"/>
    </ligand>
</feature>
<feature type="binding site" evidence="1">
    <location>
        <position position="143"/>
    </location>
    <ligand>
        <name>NADP(+)</name>
        <dbReference type="ChEBI" id="CHEBI:58349"/>
    </ligand>
</feature>
<feature type="binding site" evidence="1">
    <location>
        <position position="168"/>
    </location>
    <ligand>
        <name>substrate</name>
    </ligand>
</feature>
<feature type="binding site" evidence="1">
    <location>
        <position position="169"/>
    </location>
    <ligand>
        <name>NADP(+)</name>
        <dbReference type="ChEBI" id="CHEBI:58349"/>
    </ligand>
</feature>
<feature type="binding site" evidence="1">
    <location>
        <position position="177"/>
    </location>
    <ligand>
        <name>NADP(+)</name>
        <dbReference type="ChEBI" id="CHEBI:58349"/>
    </ligand>
</feature>
<feature type="binding site" evidence="1">
    <location>
        <position position="179"/>
    </location>
    <ligand>
        <name>substrate</name>
    </ligand>
</feature>
<feature type="binding site" evidence="1">
    <location>
        <position position="186"/>
    </location>
    <ligand>
        <name>substrate</name>
    </ligand>
</feature>
<feature type="binding site" evidence="1">
    <location>
        <begin position="200"/>
        <end position="203"/>
    </location>
    <ligand>
        <name>substrate</name>
    </ligand>
</feature>
<feature type="binding site" evidence="1">
    <location>
        <position position="213"/>
    </location>
    <ligand>
        <name>substrate</name>
    </ligand>
</feature>
<feature type="binding site" evidence="1">
    <location>
        <position position="281"/>
    </location>
    <ligand>
        <name>substrate</name>
    </ligand>
</feature>
<organism>
    <name type="scientific">Aromatoleum aromaticum (strain DSM 19018 / LMG 30748 / EbN1)</name>
    <name type="common">Azoarcus sp. (strain EbN1)</name>
    <dbReference type="NCBI Taxonomy" id="76114"/>
    <lineage>
        <taxon>Bacteria</taxon>
        <taxon>Pseudomonadati</taxon>
        <taxon>Pseudomonadota</taxon>
        <taxon>Betaproteobacteria</taxon>
        <taxon>Rhodocyclales</taxon>
        <taxon>Rhodocyclaceae</taxon>
        <taxon>Aromatoleum</taxon>
    </lineage>
</organism>
<sequence length="319" mass="35591">MIIVTGGAGFIGSNIVQGLNARGITDILVVDDLTDGHKCLNLADADIHDYMDKDDFLRRVEANEDFGPVEAIFHEGACSSTTEWDGRFVMAVNYEYTKSLLGWAVARKVPLLYASSASVYGMGPTFRESREFEHPLNMYAYSKFLFDCHLRRFAPGIDSQVVGLRYFNVYGPREQHKGSMASVAYHFHNQLNDSGRLRLFEGADGYGPGEQQRDFIHVDDVVAVNLWLLDNPGVRGIFNVGTGRAQSFNEVAHAALSWHKGSTAGGGIDYIAFPEHLRGRYQSYTQADITALRQAGYEGEFMPVEVGVPRYLEWLALRD</sequence>
<proteinExistence type="inferred from homology"/>
<gene>
    <name evidence="1" type="primary">hldD</name>
    <name type="ordered locus">AZOSEA22680</name>
    <name type="ORF">ebA3999</name>
</gene>
<reference key="1">
    <citation type="journal article" date="2005" name="Arch. Microbiol.">
        <title>The genome sequence of an anaerobic aromatic-degrading denitrifying bacterium, strain EbN1.</title>
        <authorList>
            <person name="Rabus R."/>
            <person name="Kube M."/>
            <person name="Heider J."/>
            <person name="Beck A."/>
            <person name="Heitmann K."/>
            <person name="Widdel F."/>
            <person name="Reinhardt R."/>
        </authorList>
    </citation>
    <scope>NUCLEOTIDE SEQUENCE [LARGE SCALE GENOMIC DNA]</scope>
    <source>
        <strain>DSM 19018 / LMG 30748 / EbN1</strain>
    </source>
</reference>
<accession>Q5P2S1</accession>
<keyword id="KW-0119">Carbohydrate metabolism</keyword>
<keyword id="KW-0413">Isomerase</keyword>
<keyword id="KW-0521">NADP</keyword>
<keyword id="KW-1185">Reference proteome</keyword>
<dbReference type="EC" id="5.1.3.20" evidence="1"/>
<dbReference type="EMBL" id="CR555306">
    <property type="protein sequence ID" value="CAI08393.1"/>
    <property type="molecule type" value="Genomic_DNA"/>
</dbReference>
<dbReference type="RefSeq" id="WP_011238080.1">
    <property type="nucleotide sequence ID" value="NC_006513.1"/>
</dbReference>
<dbReference type="SMR" id="Q5P2S1"/>
<dbReference type="STRING" id="76114.ebA3999"/>
<dbReference type="KEGG" id="eba:ebA3999"/>
<dbReference type="eggNOG" id="COG0451">
    <property type="taxonomic scope" value="Bacteria"/>
</dbReference>
<dbReference type="HOGENOM" id="CLU_007383_1_3_4"/>
<dbReference type="OrthoDB" id="9803010at2"/>
<dbReference type="UniPathway" id="UPA00356">
    <property type="reaction ID" value="UER00440"/>
</dbReference>
<dbReference type="Proteomes" id="UP000006552">
    <property type="component" value="Chromosome"/>
</dbReference>
<dbReference type="GO" id="GO:0008712">
    <property type="term" value="F:ADP-glyceromanno-heptose 6-epimerase activity"/>
    <property type="evidence" value="ECO:0007669"/>
    <property type="project" value="UniProtKB-UniRule"/>
</dbReference>
<dbReference type="GO" id="GO:0050661">
    <property type="term" value="F:NADP binding"/>
    <property type="evidence" value="ECO:0007669"/>
    <property type="project" value="InterPro"/>
</dbReference>
<dbReference type="GO" id="GO:0097171">
    <property type="term" value="P:ADP-L-glycero-beta-D-manno-heptose biosynthetic process"/>
    <property type="evidence" value="ECO:0007669"/>
    <property type="project" value="UniProtKB-UniPathway"/>
</dbReference>
<dbReference type="GO" id="GO:0005975">
    <property type="term" value="P:carbohydrate metabolic process"/>
    <property type="evidence" value="ECO:0007669"/>
    <property type="project" value="UniProtKB-UniRule"/>
</dbReference>
<dbReference type="CDD" id="cd05248">
    <property type="entry name" value="ADP_GME_SDR_e"/>
    <property type="match status" value="1"/>
</dbReference>
<dbReference type="Gene3D" id="3.40.50.720">
    <property type="entry name" value="NAD(P)-binding Rossmann-like Domain"/>
    <property type="match status" value="1"/>
</dbReference>
<dbReference type="Gene3D" id="3.90.25.10">
    <property type="entry name" value="UDP-galactose 4-epimerase, domain 1"/>
    <property type="match status" value="1"/>
</dbReference>
<dbReference type="HAMAP" id="MF_01601">
    <property type="entry name" value="Heptose_epimerase"/>
    <property type="match status" value="1"/>
</dbReference>
<dbReference type="InterPro" id="IPR001509">
    <property type="entry name" value="Epimerase_deHydtase"/>
</dbReference>
<dbReference type="InterPro" id="IPR011912">
    <property type="entry name" value="Heptose_epim"/>
</dbReference>
<dbReference type="InterPro" id="IPR036291">
    <property type="entry name" value="NAD(P)-bd_dom_sf"/>
</dbReference>
<dbReference type="NCBIfam" id="TIGR02197">
    <property type="entry name" value="heptose_epim"/>
    <property type="match status" value="1"/>
</dbReference>
<dbReference type="PANTHER" id="PTHR43103:SF3">
    <property type="entry name" value="ADP-L-GLYCERO-D-MANNO-HEPTOSE-6-EPIMERASE"/>
    <property type="match status" value="1"/>
</dbReference>
<dbReference type="PANTHER" id="PTHR43103">
    <property type="entry name" value="NUCLEOSIDE-DIPHOSPHATE-SUGAR EPIMERASE"/>
    <property type="match status" value="1"/>
</dbReference>
<dbReference type="Pfam" id="PF01370">
    <property type="entry name" value="Epimerase"/>
    <property type="match status" value="1"/>
</dbReference>
<dbReference type="SUPFAM" id="SSF51735">
    <property type="entry name" value="NAD(P)-binding Rossmann-fold domains"/>
    <property type="match status" value="1"/>
</dbReference>
<name>HLDD_AROAE</name>
<evidence type="ECO:0000255" key="1">
    <source>
        <dbReference type="HAMAP-Rule" id="MF_01601"/>
    </source>
</evidence>